<accession>Q9UYB5</accession>
<accession>G8ZJU5</accession>
<sequence>MKAEIITVGDELLTGNTVDSNSAFIASKLTEKGYLVRRITTVGDDVEEIKSIILEALDRKPDVLVISGGLGPTHDDVTMLAVSKALNRELELCEECLERIRKFYVELHKKGLIDDPELNEARKKMAYLPKGATPLQNTEGAAPGAFIEHEGIKIFVLPGMPREMKAMLLNEVLPRLGERTFIQKKYLAEITDESKLAPILSEAIRKFNVRIHSSPKGFGKYIGIIIFGEDEEIIEKVIEFMQSRGISFKEGW</sequence>
<name>Y1593_PYRAB</name>
<feature type="chain" id="PRO_0000156798" description="Protein PYRAB15930">
    <location>
        <begin position="1"/>
        <end position="252"/>
    </location>
</feature>
<gene>
    <name type="ordered locus">PYRAB15930</name>
    <name type="ORF">PAB1305</name>
</gene>
<organism>
    <name type="scientific">Pyrococcus abyssi (strain GE5 / Orsay)</name>
    <dbReference type="NCBI Taxonomy" id="272844"/>
    <lineage>
        <taxon>Archaea</taxon>
        <taxon>Methanobacteriati</taxon>
        <taxon>Methanobacteriota</taxon>
        <taxon>Thermococci</taxon>
        <taxon>Thermococcales</taxon>
        <taxon>Thermococcaceae</taxon>
        <taxon>Pyrococcus</taxon>
    </lineage>
</organism>
<reference key="1">
    <citation type="journal article" date="2003" name="Mol. Microbiol.">
        <title>An integrated analysis of the genome of the hyperthermophilic archaeon Pyrococcus abyssi.</title>
        <authorList>
            <person name="Cohen G.N."/>
            <person name="Barbe V."/>
            <person name="Flament D."/>
            <person name="Galperin M."/>
            <person name="Heilig R."/>
            <person name="Lecompte O."/>
            <person name="Poch O."/>
            <person name="Prieur D."/>
            <person name="Querellou J."/>
            <person name="Ripp R."/>
            <person name="Thierry J.-C."/>
            <person name="Van der Oost J."/>
            <person name="Weissenbach J."/>
            <person name="Zivanovic Y."/>
            <person name="Forterre P."/>
        </authorList>
    </citation>
    <scope>NUCLEOTIDE SEQUENCE [LARGE SCALE GENOMIC DNA]</scope>
    <source>
        <strain>GE5 / Orsay</strain>
    </source>
</reference>
<reference key="2">
    <citation type="journal article" date="2012" name="Curr. Microbiol.">
        <title>Re-annotation of two hyperthermophilic archaea Pyrococcus abyssi GE5 and Pyrococcus furiosus DSM 3638.</title>
        <authorList>
            <person name="Gao J."/>
            <person name="Wang J."/>
        </authorList>
    </citation>
    <scope>GENOME REANNOTATION</scope>
    <source>
        <strain>GE5 / Orsay</strain>
    </source>
</reference>
<protein>
    <recommendedName>
        <fullName evidence="1">Protein PYRAB15930</fullName>
    </recommendedName>
</protein>
<dbReference type="EMBL" id="AJ248288">
    <property type="protein sequence ID" value="CAB50497.1"/>
    <property type="molecule type" value="Genomic_DNA"/>
</dbReference>
<dbReference type="EMBL" id="HE613800">
    <property type="protein sequence ID" value="CCE71052.1"/>
    <property type="molecule type" value="Genomic_DNA"/>
</dbReference>
<dbReference type="PIR" id="C75007">
    <property type="entry name" value="C75007"/>
</dbReference>
<dbReference type="RefSeq" id="WP_010868711.1">
    <property type="nucleotide sequence ID" value="NC_000868.1"/>
</dbReference>
<dbReference type="SMR" id="Q9UYB5"/>
<dbReference type="STRING" id="272844.PAB1305"/>
<dbReference type="KEGG" id="pab:PAB1305"/>
<dbReference type="PATRIC" id="fig|272844.11.peg.1699"/>
<dbReference type="eggNOG" id="arCOG00215">
    <property type="taxonomic scope" value="Archaea"/>
</dbReference>
<dbReference type="HOGENOM" id="CLU_030805_0_5_2"/>
<dbReference type="OrthoDB" id="372037at2157"/>
<dbReference type="PhylomeDB" id="Q9UYB5"/>
<dbReference type="Proteomes" id="UP000000810">
    <property type="component" value="Chromosome"/>
</dbReference>
<dbReference type="Proteomes" id="UP000009139">
    <property type="component" value="Chromosome"/>
</dbReference>
<dbReference type="CDD" id="cd00885">
    <property type="entry name" value="cinA"/>
    <property type="match status" value="1"/>
</dbReference>
<dbReference type="Gene3D" id="3.40.980.10">
    <property type="entry name" value="MoaB/Mog-like domain"/>
    <property type="match status" value="1"/>
</dbReference>
<dbReference type="HAMAP" id="MF_00226_A">
    <property type="entry name" value="CinA_A"/>
    <property type="match status" value="1"/>
</dbReference>
<dbReference type="InterPro" id="IPR050101">
    <property type="entry name" value="CinA"/>
</dbReference>
<dbReference type="InterPro" id="IPR023055">
    <property type="entry name" value="CinA_Arc"/>
</dbReference>
<dbReference type="InterPro" id="IPR036425">
    <property type="entry name" value="MoaB/Mog-like_dom_sf"/>
</dbReference>
<dbReference type="InterPro" id="IPR001453">
    <property type="entry name" value="MoaB/Mog_dom"/>
</dbReference>
<dbReference type="NCBIfam" id="TIGR00177">
    <property type="entry name" value="molyb_syn"/>
    <property type="match status" value="1"/>
</dbReference>
<dbReference type="NCBIfam" id="NF002977">
    <property type="entry name" value="PRK03670.1"/>
    <property type="match status" value="1"/>
</dbReference>
<dbReference type="PANTHER" id="PTHR13939">
    <property type="entry name" value="NICOTINAMIDE-NUCLEOTIDE AMIDOHYDROLASE PNCC"/>
    <property type="match status" value="1"/>
</dbReference>
<dbReference type="PANTHER" id="PTHR13939:SF0">
    <property type="entry name" value="NMN AMIDOHYDROLASE-LIKE PROTEIN YFAY"/>
    <property type="match status" value="1"/>
</dbReference>
<dbReference type="Pfam" id="PF00994">
    <property type="entry name" value="MoCF_biosynth"/>
    <property type="match status" value="1"/>
</dbReference>
<dbReference type="SMART" id="SM00852">
    <property type="entry name" value="MoCF_biosynth"/>
    <property type="match status" value="1"/>
</dbReference>
<dbReference type="SUPFAM" id="SSF53218">
    <property type="entry name" value="Molybdenum cofactor biosynthesis proteins"/>
    <property type="match status" value="1"/>
</dbReference>
<proteinExistence type="inferred from homology"/>
<comment type="similarity">
    <text evidence="1">Belongs to the CinA family.</text>
</comment>
<evidence type="ECO:0000255" key="1">
    <source>
        <dbReference type="HAMAP-Rule" id="MF_00226"/>
    </source>
</evidence>